<evidence type="ECO:0000250" key="1"/>
<evidence type="ECO:0000305" key="2"/>
<accession>Q8Z9K9</accession>
<accession>Q7CBZ3</accession>
<proteinExistence type="inferred from homology"/>
<name>FIXC_SALTI</name>
<sequence>MSEDIFDAIIVGAGLAGSVAALVLAREGAQVLVIERGNSAGAKNVTGGRLYAHSLERIIPGFADQAPIERMITHEKLAFMTDNGAMTIDYCNGEDASASQVSYSVLRSKFDAWLMEQAEEAGAQLITGIRVDNVVQRDGKVVGVEADGDILEAKVVILADGVNSLLAEKLGMAKRVEASHVAVGVKELIELPKSVIEDRFQLQGNEGAACLFAGAPTDGLMGGGFLYTNETTLSLGLVCGLHHLKDAKKSVPQMLEDFKQHPAVAPLIAGGKLVEYAAHVVPEAGMNMQPELVGDGVLIAGDAAGMCMNLGFTIRGMDLAISAGEAAAKTVLSAMKRDDFSKQSLGEYRQHLDEGPMRDMRMYQKLPAFLDNPRMFTAYPEMAVSIARDLFTVDGSAPVPMRKKILRHAKKVGFINLMKDGLKGVTVL</sequence>
<feature type="chain" id="PRO_0000200693" description="Protein FixC">
    <location>
        <begin position="1"/>
        <end position="428"/>
    </location>
</feature>
<gene>
    <name type="primary">fixC</name>
    <name type="ordered locus">STY0087</name>
    <name type="ordered locus">t0078</name>
</gene>
<keyword id="KW-0249">Electron transport</keyword>
<keyword id="KW-0274">FAD</keyword>
<keyword id="KW-0285">Flavoprotein</keyword>
<keyword id="KW-0560">Oxidoreductase</keyword>
<keyword id="KW-0813">Transport</keyword>
<protein>
    <recommendedName>
        <fullName>Protein FixC</fullName>
    </recommendedName>
</protein>
<organism>
    <name type="scientific">Salmonella typhi</name>
    <dbReference type="NCBI Taxonomy" id="90370"/>
    <lineage>
        <taxon>Bacteria</taxon>
        <taxon>Pseudomonadati</taxon>
        <taxon>Pseudomonadota</taxon>
        <taxon>Gammaproteobacteria</taxon>
        <taxon>Enterobacterales</taxon>
        <taxon>Enterobacteriaceae</taxon>
        <taxon>Salmonella</taxon>
    </lineage>
</organism>
<dbReference type="EMBL" id="AL513382">
    <property type="protein sequence ID" value="CAD01231.1"/>
    <property type="molecule type" value="Genomic_DNA"/>
</dbReference>
<dbReference type="EMBL" id="AE014613">
    <property type="protein sequence ID" value="AAO67811.1"/>
    <property type="molecule type" value="Genomic_DNA"/>
</dbReference>
<dbReference type="RefSeq" id="NP_454687.1">
    <property type="nucleotide sequence ID" value="NC_003198.1"/>
</dbReference>
<dbReference type="RefSeq" id="WP_001287774.1">
    <property type="nucleotide sequence ID" value="NZ_WSUR01000028.1"/>
</dbReference>
<dbReference type="SMR" id="Q8Z9K9"/>
<dbReference type="STRING" id="220341.gene:17584133"/>
<dbReference type="KEGG" id="stt:t0078"/>
<dbReference type="KEGG" id="sty:STY0087"/>
<dbReference type="PATRIC" id="fig|220341.7.peg.87"/>
<dbReference type="eggNOG" id="COG0644">
    <property type="taxonomic scope" value="Bacteria"/>
</dbReference>
<dbReference type="HOGENOM" id="CLU_050977_0_0_6"/>
<dbReference type="OMA" id="KPNRYTI"/>
<dbReference type="OrthoDB" id="103324at2"/>
<dbReference type="Proteomes" id="UP000000541">
    <property type="component" value="Chromosome"/>
</dbReference>
<dbReference type="Proteomes" id="UP000002670">
    <property type="component" value="Chromosome"/>
</dbReference>
<dbReference type="GO" id="GO:0071949">
    <property type="term" value="F:FAD binding"/>
    <property type="evidence" value="ECO:0007669"/>
    <property type="project" value="InterPro"/>
</dbReference>
<dbReference type="GO" id="GO:0016491">
    <property type="term" value="F:oxidoreductase activity"/>
    <property type="evidence" value="ECO:0007669"/>
    <property type="project" value="UniProtKB-KW"/>
</dbReference>
<dbReference type="Gene3D" id="3.50.50.60">
    <property type="entry name" value="FAD/NAD(P)-binding domain"/>
    <property type="match status" value="1"/>
</dbReference>
<dbReference type="InterPro" id="IPR002938">
    <property type="entry name" value="FAD-bd"/>
</dbReference>
<dbReference type="InterPro" id="IPR036188">
    <property type="entry name" value="FAD/NAD-bd_sf"/>
</dbReference>
<dbReference type="InterPro" id="IPR039651">
    <property type="entry name" value="FixC-like"/>
</dbReference>
<dbReference type="NCBIfam" id="NF007450">
    <property type="entry name" value="PRK10015.1"/>
    <property type="match status" value="1"/>
</dbReference>
<dbReference type="NCBIfam" id="NF007542">
    <property type="entry name" value="PRK10157.1"/>
    <property type="match status" value="1"/>
</dbReference>
<dbReference type="PANTHER" id="PTHR43624">
    <property type="entry name" value="ELECTRON TRANSFER FLAVOPROTEIN-QUINONE OXIDOREDUCTASE YDIS-RELATED"/>
    <property type="match status" value="1"/>
</dbReference>
<dbReference type="PANTHER" id="PTHR43624:SF1">
    <property type="entry name" value="PROTEIN FIXC"/>
    <property type="match status" value="1"/>
</dbReference>
<dbReference type="Pfam" id="PF01494">
    <property type="entry name" value="FAD_binding_3"/>
    <property type="match status" value="1"/>
</dbReference>
<dbReference type="PRINTS" id="PR00420">
    <property type="entry name" value="RNGMNOXGNASE"/>
</dbReference>
<dbReference type="SUPFAM" id="SSF54373">
    <property type="entry name" value="FAD-linked reductases, C-terminal domain"/>
    <property type="match status" value="1"/>
</dbReference>
<dbReference type="SUPFAM" id="SSF51905">
    <property type="entry name" value="FAD/NAD(P)-binding domain"/>
    <property type="match status" value="1"/>
</dbReference>
<reference key="1">
    <citation type="journal article" date="2001" name="Nature">
        <title>Complete genome sequence of a multiple drug resistant Salmonella enterica serovar Typhi CT18.</title>
        <authorList>
            <person name="Parkhill J."/>
            <person name="Dougan G."/>
            <person name="James K.D."/>
            <person name="Thomson N.R."/>
            <person name="Pickard D."/>
            <person name="Wain J."/>
            <person name="Churcher C.M."/>
            <person name="Mungall K.L."/>
            <person name="Bentley S.D."/>
            <person name="Holden M.T.G."/>
            <person name="Sebaihia M."/>
            <person name="Baker S."/>
            <person name="Basham D."/>
            <person name="Brooks K."/>
            <person name="Chillingworth T."/>
            <person name="Connerton P."/>
            <person name="Cronin A."/>
            <person name="Davis P."/>
            <person name="Davies R.M."/>
            <person name="Dowd L."/>
            <person name="White N."/>
            <person name="Farrar J."/>
            <person name="Feltwell T."/>
            <person name="Hamlin N."/>
            <person name="Haque A."/>
            <person name="Hien T.T."/>
            <person name="Holroyd S."/>
            <person name="Jagels K."/>
            <person name="Krogh A."/>
            <person name="Larsen T.S."/>
            <person name="Leather S."/>
            <person name="Moule S."/>
            <person name="O'Gaora P."/>
            <person name="Parry C."/>
            <person name="Quail M.A."/>
            <person name="Rutherford K.M."/>
            <person name="Simmonds M."/>
            <person name="Skelton J."/>
            <person name="Stevens K."/>
            <person name="Whitehead S."/>
            <person name="Barrell B.G."/>
        </authorList>
    </citation>
    <scope>NUCLEOTIDE SEQUENCE [LARGE SCALE GENOMIC DNA]</scope>
    <source>
        <strain>CT18</strain>
    </source>
</reference>
<reference key="2">
    <citation type="journal article" date="2003" name="J. Bacteriol.">
        <title>Comparative genomics of Salmonella enterica serovar Typhi strains Ty2 and CT18.</title>
        <authorList>
            <person name="Deng W."/>
            <person name="Liou S.-R."/>
            <person name="Plunkett G. III"/>
            <person name="Mayhew G.F."/>
            <person name="Rose D.J."/>
            <person name="Burland V."/>
            <person name="Kodoyianni V."/>
            <person name="Schwartz D.C."/>
            <person name="Blattner F.R."/>
        </authorList>
    </citation>
    <scope>NUCLEOTIDE SEQUENCE [LARGE SCALE GENOMIC DNA]</scope>
    <source>
        <strain>ATCC 700931 / Ty2</strain>
    </source>
</reference>
<comment type="function">
    <text evidence="1">Could be part of an electron transfer system required for anaerobic carnitine reduction.</text>
</comment>
<comment type="cofactor">
    <cofactor evidence="2">
        <name>FAD</name>
        <dbReference type="ChEBI" id="CHEBI:57692"/>
    </cofactor>
</comment>
<comment type="similarity">
    <text evidence="2">Belongs to the ETF-QO/FixC family.</text>
</comment>